<dbReference type="EC" id="2.1.1.6"/>
<dbReference type="EMBL" id="CU329671">
    <property type="protein sequence ID" value="CAD31744.1"/>
    <property type="molecule type" value="Genomic_DNA"/>
</dbReference>
<dbReference type="SMR" id="Q8NKC1"/>
<dbReference type="BioGRID" id="280254">
    <property type="interactions" value="2"/>
</dbReference>
<dbReference type="FunCoup" id="Q8NKC1">
    <property type="interactions" value="73"/>
</dbReference>
<dbReference type="STRING" id="284812.Q8NKC1"/>
<dbReference type="iPTMnet" id="Q8NKC1"/>
<dbReference type="PaxDb" id="4896-SPBPB21E7.04c.1"/>
<dbReference type="EnsemblFungi" id="SPBPB21E7.04c.1">
    <property type="protein sequence ID" value="SPBPB21E7.04c.1:pep"/>
    <property type="gene ID" value="SPBPB21E7.04c"/>
</dbReference>
<dbReference type="KEGG" id="spo:3361178"/>
<dbReference type="PomBase" id="SPBPB21E7.04c"/>
<dbReference type="VEuPathDB" id="FungiDB:SPBPB21E7.04c"/>
<dbReference type="eggNOG" id="KOG1663">
    <property type="taxonomic scope" value="Eukaryota"/>
</dbReference>
<dbReference type="HOGENOM" id="CLU_050461_0_0_1"/>
<dbReference type="InParanoid" id="Q8NKC1"/>
<dbReference type="OMA" id="SWMPILG"/>
<dbReference type="PhylomeDB" id="Q8NKC1"/>
<dbReference type="Reactome" id="R-SPO-156581">
    <property type="pathway name" value="Methylation"/>
</dbReference>
<dbReference type="Reactome" id="R-SPO-379397">
    <property type="pathway name" value="Enzymatic degradation of dopamine by COMT"/>
</dbReference>
<dbReference type="Reactome" id="R-SPO-379398">
    <property type="pathway name" value="Enzymatic degradation of Dopamine by monoamine oxidase"/>
</dbReference>
<dbReference type="PRO" id="PR:Q8NKC1"/>
<dbReference type="Proteomes" id="UP000002485">
    <property type="component" value="Chromosome II"/>
</dbReference>
<dbReference type="GO" id="GO:0000324">
    <property type="term" value="C:fungal-type vacuole"/>
    <property type="evidence" value="ECO:0007005"/>
    <property type="project" value="PomBase"/>
</dbReference>
<dbReference type="GO" id="GO:0046872">
    <property type="term" value="F:metal ion binding"/>
    <property type="evidence" value="ECO:0007669"/>
    <property type="project" value="UniProtKB-KW"/>
</dbReference>
<dbReference type="GO" id="GO:0008171">
    <property type="term" value="F:O-methyltransferase activity"/>
    <property type="evidence" value="ECO:0000269"/>
    <property type="project" value="PomBase"/>
</dbReference>
<dbReference type="GO" id="GO:0006584">
    <property type="term" value="P:catecholamine metabolic process"/>
    <property type="evidence" value="ECO:0007669"/>
    <property type="project" value="UniProtKB-KW"/>
</dbReference>
<dbReference type="GO" id="GO:1990748">
    <property type="term" value="P:cellular detoxification"/>
    <property type="evidence" value="ECO:0000269"/>
    <property type="project" value="PomBase"/>
</dbReference>
<dbReference type="GO" id="GO:0032259">
    <property type="term" value="P:methylation"/>
    <property type="evidence" value="ECO:0007669"/>
    <property type="project" value="UniProtKB-KW"/>
</dbReference>
<dbReference type="FunFam" id="3.40.50.150:FF:000054">
    <property type="entry name" value="Catechol O-methyltransferase"/>
    <property type="match status" value="1"/>
</dbReference>
<dbReference type="Gene3D" id="3.40.50.150">
    <property type="entry name" value="Vaccinia Virus protein VP39"/>
    <property type="match status" value="1"/>
</dbReference>
<dbReference type="InterPro" id="IPR029063">
    <property type="entry name" value="SAM-dependent_MTases_sf"/>
</dbReference>
<dbReference type="InterPro" id="IPR002935">
    <property type="entry name" value="SAM_O-MeTrfase"/>
</dbReference>
<dbReference type="PANTHER" id="PTHR43836">
    <property type="entry name" value="CATECHOL O-METHYLTRANSFERASE 1-RELATED"/>
    <property type="match status" value="1"/>
</dbReference>
<dbReference type="PANTHER" id="PTHR43836:SF2">
    <property type="entry name" value="CATECHOL O-METHYLTRANSFERASE 1-RELATED"/>
    <property type="match status" value="1"/>
</dbReference>
<dbReference type="Pfam" id="PF01596">
    <property type="entry name" value="Methyltransf_3"/>
    <property type="match status" value="1"/>
</dbReference>
<dbReference type="SUPFAM" id="SSF53335">
    <property type="entry name" value="S-adenosyl-L-methionine-dependent methyltransferases"/>
    <property type="match status" value="1"/>
</dbReference>
<dbReference type="PROSITE" id="PS51682">
    <property type="entry name" value="SAM_OMT_I"/>
    <property type="match status" value="1"/>
</dbReference>
<comment type="catalytic activity">
    <reaction>
        <text>a catechol + S-adenosyl-L-methionine = a guaiacol + S-adenosyl-L-homocysteine + H(+)</text>
        <dbReference type="Rhea" id="RHEA:17877"/>
        <dbReference type="ChEBI" id="CHEBI:15378"/>
        <dbReference type="ChEBI" id="CHEBI:33566"/>
        <dbReference type="ChEBI" id="CHEBI:57856"/>
        <dbReference type="ChEBI" id="CHEBI:59789"/>
        <dbReference type="ChEBI" id="CHEBI:134251"/>
        <dbReference type="EC" id="2.1.1.6"/>
    </reaction>
</comment>
<comment type="cofactor">
    <cofactor evidence="1">
        <name>Mg(2+)</name>
        <dbReference type="ChEBI" id="CHEBI:18420"/>
    </cofactor>
    <text evidence="1">Binds 1 Mg(2+) ion per subunit.</text>
</comment>
<comment type="subcellular location">
    <subcellularLocation>
        <location evidence="3">Vacuole</location>
    </subcellularLocation>
</comment>
<comment type="similarity">
    <text evidence="2">Belongs to the class I-like SAM-binding methyltransferase superfamily. Cation-dependent O-methyltransferase family.</text>
</comment>
<name>COMT2_SCHPO</name>
<accession>Q8NKC1</accession>
<proteinExistence type="inferred from homology"/>
<feature type="chain" id="PRO_0000318149" description="Probable catechol O-methyltransferase 2">
    <location>
        <begin position="1"/>
        <end position="281"/>
    </location>
</feature>
<feature type="binding site" evidence="2">
    <location>
        <position position="78"/>
    </location>
    <ligand>
        <name>S-adenosyl-L-methionine</name>
        <dbReference type="ChEBI" id="CHEBI:59789"/>
    </ligand>
</feature>
<feature type="binding site" evidence="2">
    <location>
        <position position="100"/>
    </location>
    <ligand>
        <name>S-adenosyl-L-methionine</name>
        <dbReference type="ChEBI" id="CHEBI:59789"/>
    </ligand>
</feature>
<feature type="binding site" evidence="2">
    <location>
        <position position="108"/>
    </location>
    <ligand>
        <name>S-adenosyl-L-methionine</name>
        <dbReference type="ChEBI" id="CHEBI:59789"/>
    </ligand>
</feature>
<feature type="binding site" evidence="2">
    <location>
        <position position="127"/>
    </location>
    <ligand>
        <name>S-adenosyl-L-methionine</name>
        <dbReference type="ChEBI" id="CHEBI:59789"/>
    </ligand>
</feature>
<feature type="binding site" evidence="2">
    <location>
        <position position="128"/>
    </location>
    <ligand>
        <name>S-adenosyl-L-methionine</name>
        <dbReference type="ChEBI" id="CHEBI:59789"/>
    </ligand>
</feature>
<feature type="binding site" evidence="2">
    <location>
        <position position="156"/>
    </location>
    <ligand>
        <name>S-adenosyl-L-methionine</name>
        <dbReference type="ChEBI" id="CHEBI:59789"/>
    </ligand>
</feature>
<feature type="binding site" evidence="1">
    <location>
        <position position="183"/>
    </location>
    <ligand>
        <name>Mg(2+)</name>
        <dbReference type="ChEBI" id="CHEBI:18420"/>
    </ligand>
</feature>
<feature type="binding site" evidence="2">
    <location>
        <position position="183"/>
    </location>
    <ligand>
        <name>S-adenosyl-L-methionine</name>
        <dbReference type="ChEBI" id="CHEBI:59789"/>
    </ligand>
</feature>
<feature type="binding site" evidence="1">
    <location>
        <position position="186"/>
    </location>
    <ligand>
        <name>substrate</name>
    </ligand>
</feature>
<feature type="binding site" evidence="1">
    <location>
        <position position="211"/>
    </location>
    <ligand>
        <name>Mg(2+)</name>
        <dbReference type="ChEBI" id="CHEBI:18420"/>
    </ligand>
</feature>
<feature type="binding site" evidence="1">
    <location>
        <position position="212"/>
    </location>
    <ligand>
        <name>Mg(2+)</name>
        <dbReference type="ChEBI" id="CHEBI:18420"/>
    </ligand>
</feature>
<feature type="binding site" evidence="1">
    <location>
        <position position="212"/>
    </location>
    <ligand>
        <name>substrate</name>
    </ligand>
</feature>
<reference key="1">
    <citation type="journal article" date="2002" name="Nature">
        <title>The genome sequence of Schizosaccharomyces pombe.</title>
        <authorList>
            <person name="Wood V."/>
            <person name="Gwilliam R."/>
            <person name="Rajandream M.A."/>
            <person name="Lyne M.H."/>
            <person name="Lyne R."/>
            <person name="Stewart A."/>
            <person name="Sgouros J.G."/>
            <person name="Peat N."/>
            <person name="Hayles J."/>
            <person name="Baker S.G."/>
            <person name="Basham D."/>
            <person name="Bowman S."/>
            <person name="Brooks K."/>
            <person name="Brown D."/>
            <person name="Brown S."/>
            <person name="Chillingworth T."/>
            <person name="Churcher C.M."/>
            <person name="Collins M."/>
            <person name="Connor R."/>
            <person name="Cronin A."/>
            <person name="Davis P."/>
            <person name="Feltwell T."/>
            <person name="Fraser A."/>
            <person name="Gentles S."/>
            <person name="Goble A."/>
            <person name="Hamlin N."/>
            <person name="Harris D.E."/>
            <person name="Hidalgo J."/>
            <person name="Hodgson G."/>
            <person name="Holroyd S."/>
            <person name="Hornsby T."/>
            <person name="Howarth S."/>
            <person name="Huckle E.J."/>
            <person name="Hunt S."/>
            <person name="Jagels K."/>
            <person name="James K.D."/>
            <person name="Jones L."/>
            <person name="Jones M."/>
            <person name="Leather S."/>
            <person name="McDonald S."/>
            <person name="McLean J."/>
            <person name="Mooney P."/>
            <person name="Moule S."/>
            <person name="Mungall K.L."/>
            <person name="Murphy L.D."/>
            <person name="Niblett D."/>
            <person name="Odell C."/>
            <person name="Oliver K."/>
            <person name="O'Neil S."/>
            <person name="Pearson D."/>
            <person name="Quail M.A."/>
            <person name="Rabbinowitsch E."/>
            <person name="Rutherford K.M."/>
            <person name="Rutter S."/>
            <person name="Saunders D."/>
            <person name="Seeger K."/>
            <person name="Sharp S."/>
            <person name="Skelton J."/>
            <person name="Simmonds M.N."/>
            <person name="Squares R."/>
            <person name="Squares S."/>
            <person name="Stevens K."/>
            <person name="Taylor K."/>
            <person name="Taylor R.G."/>
            <person name="Tivey A."/>
            <person name="Walsh S.V."/>
            <person name="Warren T."/>
            <person name="Whitehead S."/>
            <person name="Woodward J.R."/>
            <person name="Volckaert G."/>
            <person name="Aert R."/>
            <person name="Robben J."/>
            <person name="Grymonprez B."/>
            <person name="Weltjens I."/>
            <person name="Vanstreels E."/>
            <person name="Rieger M."/>
            <person name="Schaefer M."/>
            <person name="Mueller-Auer S."/>
            <person name="Gabel C."/>
            <person name="Fuchs M."/>
            <person name="Duesterhoeft A."/>
            <person name="Fritzc C."/>
            <person name="Holzer E."/>
            <person name="Moestl D."/>
            <person name="Hilbert H."/>
            <person name="Borzym K."/>
            <person name="Langer I."/>
            <person name="Beck A."/>
            <person name="Lehrach H."/>
            <person name="Reinhardt R."/>
            <person name="Pohl T.M."/>
            <person name="Eger P."/>
            <person name="Zimmermann W."/>
            <person name="Wedler H."/>
            <person name="Wambutt R."/>
            <person name="Purnelle B."/>
            <person name="Goffeau A."/>
            <person name="Cadieu E."/>
            <person name="Dreano S."/>
            <person name="Gloux S."/>
            <person name="Lelaure V."/>
            <person name="Mottier S."/>
            <person name="Galibert F."/>
            <person name="Aves S.J."/>
            <person name="Xiang Z."/>
            <person name="Hunt C."/>
            <person name="Moore K."/>
            <person name="Hurst S.M."/>
            <person name="Lucas M."/>
            <person name="Rochet M."/>
            <person name="Gaillardin C."/>
            <person name="Tallada V.A."/>
            <person name="Garzon A."/>
            <person name="Thode G."/>
            <person name="Daga R.R."/>
            <person name="Cruzado L."/>
            <person name="Jimenez J."/>
            <person name="Sanchez M."/>
            <person name="del Rey F."/>
            <person name="Benito J."/>
            <person name="Dominguez A."/>
            <person name="Revuelta J.L."/>
            <person name="Moreno S."/>
            <person name="Armstrong J."/>
            <person name="Forsburg S.L."/>
            <person name="Cerutti L."/>
            <person name="Lowe T."/>
            <person name="McCombie W.R."/>
            <person name="Paulsen I."/>
            <person name="Potashkin J."/>
            <person name="Shpakovski G.V."/>
            <person name="Ussery D."/>
            <person name="Barrell B.G."/>
            <person name="Nurse P."/>
        </authorList>
    </citation>
    <scope>NUCLEOTIDE SEQUENCE [LARGE SCALE GENOMIC DNA]</scope>
    <source>
        <strain>972 / ATCC 24843</strain>
    </source>
</reference>
<reference key="2">
    <citation type="journal article" date="2006" name="Nat. Biotechnol.">
        <title>ORFeome cloning and global analysis of protein localization in the fission yeast Schizosaccharomyces pombe.</title>
        <authorList>
            <person name="Matsuyama A."/>
            <person name="Arai R."/>
            <person name="Yashiroda Y."/>
            <person name="Shirai A."/>
            <person name="Kamata A."/>
            <person name="Sekido S."/>
            <person name="Kobayashi Y."/>
            <person name="Hashimoto A."/>
            <person name="Hamamoto M."/>
            <person name="Hiraoka Y."/>
            <person name="Horinouchi S."/>
            <person name="Yoshida M."/>
        </authorList>
    </citation>
    <scope>SUBCELLULAR LOCATION [LARGE SCALE ANALYSIS]</scope>
</reference>
<organism>
    <name type="scientific">Schizosaccharomyces pombe (strain 972 / ATCC 24843)</name>
    <name type="common">Fission yeast</name>
    <dbReference type="NCBI Taxonomy" id="284812"/>
    <lineage>
        <taxon>Eukaryota</taxon>
        <taxon>Fungi</taxon>
        <taxon>Dikarya</taxon>
        <taxon>Ascomycota</taxon>
        <taxon>Taphrinomycotina</taxon>
        <taxon>Schizosaccharomycetes</taxon>
        <taxon>Schizosaccharomycetales</taxon>
        <taxon>Schizosaccharomycetaceae</taxon>
        <taxon>Schizosaccharomyces</taxon>
    </lineage>
</organism>
<sequence length="281" mass="32123">MFAQALHWLTTSKLRYALALPFLFFILYTKTKKSKEQELENYIFSLPREKLDQIRGKPDEVINVIDEYVEQGHFLMNIGKLKGKIISEKIQQVKPKVMIELGGYVGYSAILFGKQLTDPSAHYYSLEVNPKFAKIASKIIDLAGLSNKVTIIVGKATDSLVELRRSLPNVIPSFEYLDFVFIDHWKDLYVPDLRVMETLDLIGQGSIIAADNILRPGVPEYVKYVQGSLDYRKEYDSTVSNVNGPQFIGKWNIIYKSKTIKVDDGKREKDAVEITEYIEAK</sequence>
<keyword id="KW-0128">Catecholamine metabolism</keyword>
<keyword id="KW-0460">Magnesium</keyword>
<keyword id="KW-0479">Metal-binding</keyword>
<keyword id="KW-0489">Methyltransferase</keyword>
<keyword id="KW-1185">Reference proteome</keyword>
<keyword id="KW-0949">S-adenosyl-L-methionine</keyword>
<keyword id="KW-0808">Transferase</keyword>
<keyword id="KW-0926">Vacuole</keyword>
<evidence type="ECO:0000250" key="1"/>
<evidence type="ECO:0000255" key="2">
    <source>
        <dbReference type="PROSITE-ProRule" id="PRU01019"/>
    </source>
</evidence>
<evidence type="ECO:0000269" key="3">
    <source>
    </source>
</evidence>
<gene>
    <name type="ORF">SPBPB21E7.04c</name>
</gene>
<protein>
    <recommendedName>
        <fullName>Probable catechol O-methyltransferase 2</fullName>
        <ecNumber>2.1.1.6</ecNumber>
    </recommendedName>
</protein>